<feature type="chain" id="PRO_0000292842" description="MORN repeat-containing protein 5">
    <location>
        <begin position="1"/>
        <end position="178"/>
    </location>
</feature>
<feature type="repeat" description="MORN 1">
    <location>
        <begin position="8"/>
        <end position="30"/>
    </location>
</feature>
<feature type="repeat" description="MORN 2">
    <location>
        <begin position="31"/>
        <end position="53"/>
    </location>
</feature>
<feature type="repeat" description="MORN 3">
    <location>
        <begin position="54"/>
        <end position="75"/>
    </location>
</feature>
<evidence type="ECO:0000250" key="1">
    <source>
        <dbReference type="UniProtKB" id="Q9DAI9"/>
    </source>
</evidence>
<organism>
    <name type="scientific">Danio rerio</name>
    <name type="common">Zebrafish</name>
    <name type="synonym">Brachydanio rerio</name>
    <dbReference type="NCBI Taxonomy" id="7955"/>
    <lineage>
        <taxon>Eukaryota</taxon>
        <taxon>Metazoa</taxon>
        <taxon>Chordata</taxon>
        <taxon>Craniata</taxon>
        <taxon>Vertebrata</taxon>
        <taxon>Euteleostomi</taxon>
        <taxon>Actinopterygii</taxon>
        <taxon>Neopterygii</taxon>
        <taxon>Teleostei</taxon>
        <taxon>Ostariophysi</taxon>
        <taxon>Cypriniformes</taxon>
        <taxon>Danionidae</taxon>
        <taxon>Danioninae</taxon>
        <taxon>Danio</taxon>
    </lineage>
</organism>
<accession>Q4VBJ9</accession>
<proteinExistence type="evidence at transcript level"/>
<sequence>MELMGSSYDGDYNNGRMEGTGEYTIPTHTRYVGEMKDGMFHGKGVLHFPNGSKYEGTWEKGICKEGKYTFSDGLKYKETDWDYCDGKDRRFYSERCNGLKPAGESQLTDPDPPRVIPDGCYDTGDGFYDPNTRVVKGYDGNFLRNADDQEHEWIVLSCRKSLDEFTGYCPRASTLEEK</sequence>
<keyword id="KW-0966">Cell projection</keyword>
<keyword id="KW-0969">Cilium</keyword>
<keyword id="KW-0282">Flagellum</keyword>
<keyword id="KW-1185">Reference proteome</keyword>
<keyword id="KW-0677">Repeat</keyword>
<gene>
    <name type="primary">morn5</name>
    <name type="ORF">zgc:112044</name>
</gene>
<protein>
    <recommendedName>
        <fullName>MORN repeat-containing protein 5</fullName>
    </recommendedName>
</protein>
<comment type="subcellular location">
    <subcellularLocation>
        <location evidence="1">Cell projection</location>
        <location evidence="1">Cilium</location>
        <location evidence="1">Flagellum</location>
    </subcellularLocation>
</comment>
<reference key="1">
    <citation type="submission" date="2005-05" db="EMBL/GenBank/DDBJ databases">
        <authorList>
            <consortium name="NIH - Zebrafish Gene Collection (ZGC) project"/>
        </authorList>
    </citation>
    <scope>NUCLEOTIDE SEQUENCE [LARGE SCALE MRNA]</scope>
    <source>
        <tissue>Olfactory epithelium</tissue>
    </source>
</reference>
<dbReference type="EMBL" id="BC095656">
    <property type="protein sequence ID" value="AAH95656.1"/>
    <property type="molecule type" value="mRNA"/>
</dbReference>
<dbReference type="RefSeq" id="NP_001019584.1">
    <property type="nucleotide sequence ID" value="NM_001024413.2"/>
</dbReference>
<dbReference type="SMR" id="Q4VBJ9"/>
<dbReference type="FunCoup" id="Q4VBJ9">
    <property type="interactions" value="460"/>
</dbReference>
<dbReference type="STRING" id="7955.ENSDARP00000041381"/>
<dbReference type="PaxDb" id="7955-ENSDARP00000041381"/>
<dbReference type="Ensembl" id="ENSDART00000041382">
    <property type="protein sequence ID" value="ENSDARP00000041381"/>
    <property type="gene ID" value="ENSDARG00000033610"/>
</dbReference>
<dbReference type="GeneID" id="554117"/>
<dbReference type="KEGG" id="dre:554117"/>
<dbReference type="AGR" id="ZFIN:ZDB-GENE-050522-267"/>
<dbReference type="CTD" id="254956"/>
<dbReference type="ZFIN" id="ZDB-GENE-050522-267">
    <property type="gene designation" value="morn5"/>
</dbReference>
<dbReference type="eggNOG" id="KOG0231">
    <property type="taxonomic scope" value="Eukaryota"/>
</dbReference>
<dbReference type="HOGENOM" id="CLU_117237_0_0_1"/>
<dbReference type="InParanoid" id="Q4VBJ9"/>
<dbReference type="OMA" id="NGRMEGK"/>
<dbReference type="OrthoDB" id="300500at2759"/>
<dbReference type="PhylomeDB" id="Q4VBJ9"/>
<dbReference type="TreeFam" id="TF327409"/>
<dbReference type="PRO" id="PR:Q4VBJ9"/>
<dbReference type="Proteomes" id="UP000000437">
    <property type="component" value="Alternate scaffold 10"/>
</dbReference>
<dbReference type="Proteomes" id="UP000000437">
    <property type="component" value="Chromosome 10"/>
</dbReference>
<dbReference type="Bgee" id="ENSDARG00000033610">
    <property type="expression patterns" value="Expressed in testis and 4 other cell types or tissues"/>
</dbReference>
<dbReference type="GO" id="GO:0036126">
    <property type="term" value="C:sperm flagellum"/>
    <property type="evidence" value="ECO:0000250"/>
    <property type="project" value="UniProtKB"/>
</dbReference>
<dbReference type="Gene3D" id="2.20.110.10">
    <property type="entry name" value="Histone H3 K4-specific methyltransferase SET7/9 N-terminal domain"/>
    <property type="match status" value="1"/>
</dbReference>
<dbReference type="InterPro" id="IPR003409">
    <property type="entry name" value="MORN"/>
</dbReference>
<dbReference type="InterPro" id="IPR042814">
    <property type="entry name" value="Morn5"/>
</dbReference>
<dbReference type="PANTHER" id="PTHR46437">
    <property type="entry name" value="MORN REPEAT-CONTAINING PROTEIN 5"/>
    <property type="match status" value="1"/>
</dbReference>
<dbReference type="PANTHER" id="PTHR46437:SF1">
    <property type="entry name" value="MORN REPEAT-CONTAINING PROTEIN 5"/>
    <property type="match status" value="1"/>
</dbReference>
<dbReference type="Pfam" id="PF02493">
    <property type="entry name" value="MORN"/>
    <property type="match status" value="3"/>
</dbReference>
<dbReference type="SMART" id="SM00698">
    <property type="entry name" value="MORN"/>
    <property type="match status" value="3"/>
</dbReference>
<dbReference type="SUPFAM" id="SSF82185">
    <property type="entry name" value="Histone H3 K4-specific methyltransferase SET7/9 N-terminal domain"/>
    <property type="match status" value="1"/>
</dbReference>
<name>MORN5_DANRE</name>